<dbReference type="EC" id="7.1.1.-" evidence="1"/>
<dbReference type="EMBL" id="AE017125">
    <property type="protein sequence ID" value="AAP78199.1"/>
    <property type="molecule type" value="Genomic_DNA"/>
</dbReference>
<dbReference type="RefSeq" id="WP_011116442.1">
    <property type="nucleotide sequence ID" value="NC_004917.1"/>
</dbReference>
<dbReference type="SMR" id="Q7VFS3"/>
<dbReference type="STRING" id="235279.HH_1602"/>
<dbReference type="KEGG" id="hhe:HH_1602"/>
<dbReference type="eggNOG" id="COG0377">
    <property type="taxonomic scope" value="Bacteria"/>
</dbReference>
<dbReference type="HOGENOM" id="CLU_055737_7_3_7"/>
<dbReference type="OrthoDB" id="9786737at2"/>
<dbReference type="Proteomes" id="UP000002495">
    <property type="component" value="Chromosome"/>
</dbReference>
<dbReference type="GO" id="GO:0005886">
    <property type="term" value="C:plasma membrane"/>
    <property type="evidence" value="ECO:0007669"/>
    <property type="project" value="UniProtKB-SubCell"/>
</dbReference>
<dbReference type="GO" id="GO:0045271">
    <property type="term" value="C:respiratory chain complex I"/>
    <property type="evidence" value="ECO:0007669"/>
    <property type="project" value="TreeGrafter"/>
</dbReference>
<dbReference type="GO" id="GO:0051539">
    <property type="term" value="F:4 iron, 4 sulfur cluster binding"/>
    <property type="evidence" value="ECO:0007669"/>
    <property type="project" value="UniProtKB-KW"/>
</dbReference>
<dbReference type="GO" id="GO:0005506">
    <property type="term" value="F:iron ion binding"/>
    <property type="evidence" value="ECO:0007669"/>
    <property type="project" value="UniProtKB-UniRule"/>
</dbReference>
<dbReference type="GO" id="GO:0008137">
    <property type="term" value="F:NADH dehydrogenase (ubiquinone) activity"/>
    <property type="evidence" value="ECO:0007669"/>
    <property type="project" value="InterPro"/>
</dbReference>
<dbReference type="GO" id="GO:0050136">
    <property type="term" value="F:NADH:ubiquinone reductase (non-electrogenic) activity"/>
    <property type="evidence" value="ECO:0007669"/>
    <property type="project" value="UniProtKB-UniRule"/>
</dbReference>
<dbReference type="GO" id="GO:0048038">
    <property type="term" value="F:quinone binding"/>
    <property type="evidence" value="ECO:0007669"/>
    <property type="project" value="UniProtKB-KW"/>
</dbReference>
<dbReference type="GO" id="GO:0009060">
    <property type="term" value="P:aerobic respiration"/>
    <property type="evidence" value="ECO:0007669"/>
    <property type="project" value="TreeGrafter"/>
</dbReference>
<dbReference type="GO" id="GO:0015990">
    <property type="term" value="P:electron transport coupled proton transport"/>
    <property type="evidence" value="ECO:0007669"/>
    <property type="project" value="TreeGrafter"/>
</dbReference>
<dbReference type="FunFam" id="3.40.50.12280:FF:000002">
    <property type="entry name" value="NADH-quinone oxidoreductase subunit B"/>
    <property type="match status" value="1"/>
</dbReference>
<dbReference type="Gene3D" id="3.40.50.12280">
    <property type="match status" value="1"/>
</dbReference>
<dbReference type="HAMAP" id="MF_01356">
    <property type="entry name" value="NDH1_NuoB"/>
    <property type="match status" value="1"/>
</dbReference>
<dbReference type="InterPro" id="IPR006137">
    <property type="entry name" value="NADH_UbQ_OxRdtase-like_20kDa"/>
</dbReference>
<dbReference type="InterPro" id="IPR006138">
    <property type="entry name" value="NADH_UQ_OxRdtase_20Kd_su"/>
</dbReference>
<dbReference type="NCBIfam" id="TIGR01957">
    <property type="entry name" value="nuoB_fam"/>
    <property type="match status" value="1"/>
</dbReference>
<dbReference type="NCBIfam" id="NF005012">
    <property type="entry name" value="PRK06411.1"/>
    <property type="match status" value="1"/>
</dbReference>
<dbReference type="PANTHER" id="PTHR11995">
    <property type="entry name" value="NADH DEHYDROGENASE"/>
    <property type="match status" value="1"/>
</dbReference>
<dbReference type="PANTHER" id="PTHR11995:SF14">
    <property type="entry name" value="NADH DEHYDROGENASE [UBIQUINONE] IRON-SULFUR PROTEIN 7, MITOCHONDRIAL"/>
    <property type="match status" value="1"/>
</dbReference>
<dbReference type="Pfam" id="PF01058">
    <property type="entry name" value="Oxidored_q6"/>
    <property type="match status" value="1"/>
</dbReference>
<dbReference type="SUPFAM" id="SSF56770">
    <property type="entry name" value="HydA/Nqo6-like"/>
    <property type="match status" value="1"/>
</dbReference>
<sequence length="169" mass="19006">MAEHQVNYTQNNGLPIVLSSVDKLLNWSRSNSLWGVTYGLACCAIEMMATGGSRFDLDRFGSIFRASPRQSDLMIISGTVTKKHAEFVRRLYDQMPEPKWVISMGSCANTGGMFNTYATVQGVDRIIPVDIYLPGCAPRPETLQYAIMVLQQKIRRQKALPHLKPKRLI</sequence>
<name>NUOB_HELHP</name>
<gene>
    <name evidence="1" type="primary">nuoB</name>
    <name type="ordered locus">HH_1602</name>
</gene>
<accession>Q7VFS3</accession>
<evidence type="ECO:0000255" key="1">
    <source>
        <dbReference type="HAMAP-Rule" id="MF_01356"/>
    </source>
</evidence>
<organism>
    <name type="scientific">Helicobacter hepaticus (strain ATCC 51449 / 3B1)</name>
    <dbReference type="NCBI Taxonomy" id="235279"/>
    <lineage>
        <taxon>Bacteria</taxon>
        <taxon>Pseudomonadati</taxon>
        <taxon>Campylobacterota</taxon>
        <taxon>Epsilonproteobacteria</taxon>
        <taxon>Campylobacterales</taxon>
        <taxon>Helicobacteraceae</taxon>
        <taxon>Helicobacter</taxon>
    </lineage>
</organism>
<reference key="1">
    <citation type="journal article" date="2003" name="Proc. Natl. Acad. Sci. U.S.A.">
        <title>The complete genome sequence of the carcinogenic bacterium Helicobacter hepaticus.</title>
        <authorList>
            <person name="Suerbaum S."/>
            <person name="Josenhans C."/>
            <person name="Sterzenbach T."/>
            <person name="Drescher B."/>
            <person name="Brandt P."/>
            <person name="Bell M."/>
            <person name="Droege M."/>
            <person name="Fartmann B."/>
            <person name="Fischer H.-P."/>
            <person name="Ge Z."/>
            <person name="Hoerster A."/>
            <person name="Holland R."/>
            <person name="Klein K."/>
            <person name="Koenig J."/>
            <person name="Macko L."/>
            <person name="Mendz G.L."/>
            <person name="Nyakatura G."/>
            <person name="Schauer D.B."/>
            <person name="Shen Z."/>
            <person name="Weber J."/>
            <person name="Frosch M."/>
            <person name="Fox J.G."/>
        </authorList>
    </citation>
    <scope>NUCLEOTIDE SEQUENCE [LARGE SCALE GENOMIC DNA]</scope>
    <source>
        <strain>ATCC 51449 / 3B1</strain>
    </source>
</reference>
<feature type="chain" id="PRO_1000166657" description="NADH-quinone oxidoreductase subunit B">
    <location>
        <begin position="1"/>
        <end position="169"/>
    </location>
</feature>
<feature type="binding site" evidence="1">
    <location>
        <position position="42"/>
    </location>
    <ligand>
        <name>[4Fe-4S] cluster</name>
        <dbReference type="ChEBI" id="CHEBI:49883"/>
    </ligand>
</feature>
<feature type="binding site" evidence="1">
    <location>
        <position position="43"/>
    </location>
    <ligand>
        <name>[4Fe-4S] cluster</name>
        <dbReference type="ChEBI" id="CHEBI:49883"/>
    </ligand>
</feature>
<feature type="binding site" evidence="1">
    <location>
        <position position="107"/>
    </location>
    <ligand>
        <name>[4Fe-4S] cluster</name>
        <dbReference type="ChEBI" id="CHEBI:49883"/>
    </ligand>
</feature>
<feature type="binding site" evidence="1">
    <location>
        <position position="136"/>
    </location>
    <ligand>
        <name>[4Fe-4S] cluster</name>
        <dbReference type="ChEBI" id="CHEBI:49883"/>
    </ligand>
</feature>
<protein>
    <recommendedName>
        <fullName evidence="1">NADH-quinone oxidoreductase subunit B</fullName>
        <ecNumber evidence="1">7.1.1.-</ecNumber>
    </recommendedName>
    <alternativeName>
        <fullName evidence="1">NADH dehydrogenase I subunit B</fullName>
    </alternativeName>
    <alternativeName>
        <fullName evidence="1">NDH-1 subunit B</fullName>
    </alternativeName>
</protein>
<keyword id="KW-0004">4Fe-4S</keyword>
<keyword id="KW-0997">Cell inner membrane</keyword>
<keyword id="KW-1003">Cell membrane</keyword>
<keyword id="KW-0408">Iron</keyword>
<keyword id="KW-0411">Iron-sulfur</keyword>
<keyword id="KW-0472">Membrane</keyword>
<keyword id="KW-0479">Metal-binding</keyword>
<keyword id="KW-0520">NAD</keyword>
<keyword id="KW-0874">Quinone</keyword>
<keyword id="KW-1185">Reference proteome</keyword>
<keyword id="KW-1278">Translocase</keyword>
<keyword id="KW-0813">Transport</keyword>
<keyword id="KW-0830">Ubiquinone</keyword>
<comment type="function">
    <text evidence="1">NDH-1 shuttles electrons from NADH, via FMN and iron-sulfur (Fe-S) centers, to quinones in the respiratory chain. The immediate electron acceptor for the enzyme in this species is believed to be ubiquinone. Couples the redox reaction to proton translocation (for every two electrons transferred, four hydrogen ions are translocated across the cytoplasmic membrane), and thus conserves the redox energy in a proton gradient.</text>
</comment>
<comment type="catalytic activity">
    <reaction evidence="1">
        <text>a quinone + NADH + 5 H(+)(in) = a quinol + NAD(+) + 4 H(+)(out)</text>
        <dbReference type="Rhea" id="RHEA:57888"/>
        <dbReference type="ChEBI" id="CHEBI:15378"/>
        <dbReference type="ChEBI" id="CHEBI:24646"/>
        <dbReference type="ChEBI" id="CHEBI:57540"/>
        <dbReference type="ChEBI" id="CHEBI:57945"/>
        <dbReference type="ChEBI" id="CHEBI:132124"/>
    </reaction>
</comment>
<comment type="cofactor">
    <cofactor evidence="1">
        <name>[4Fe-4S] cluster</name>
        <dbReference type="ChEBI" id="CHEBI:49883"/>
    </cofactor>
    <text evidence="1">Binds 1 [4Fe-4S] cluster.</text>
</comment>
<comment type="subunit">
    <text evidence="1">NDH-1 is composed of 14 different subunits. Subunits NuoB, C, D, E, F, and G constitute the peripheral sector of the complex.</text>
</comment>
<comment type="subcellular location">
    <subcellularLocation>
        <location evidence="1">Cell inner membrane</location>
        <topology evidence="1">Peripheral membrane protein</topology>
        <orientation evidence="1">Cytoplasmic side</orientation>
    </subcellularLocation>
</comment>
<comment type="similarity">
    <text evidence="1">Belongs to the complex I 20 kDa subunit family.</text>
</comment>
<proteinExistence type="inferred from homology"/>